<organism>
    <name type="scientific">Tomato ringspot virus (isolate raspberry)</name>
    <name type="common">ToRSV</name>
    <dbReference type="NCBI Taxonomy" id="12281"/>
    <lineage>
        <taxon>Viruses</taxon>
        <taxon>Riboviria</taxon>
        <taxon>Orthornavirae</taxon>
        <taxon>Pisuviricota</taxon>
        <taxon>Pisoniviricetes</taxon>
        <taxon>Picornavirales</taxon>
        <taxon>Secoviridae</taxon>
        <taxon>Comovirinae</taxon>
        <taxon>Nepovirus</taxon>
        <taxon>Nepovirus lycopersici</taxon>
    </lineage>
</organism>
<protein>
    <recommendedName>
        <fullName>RNA2 polyprotein</fullName>
    </recommendedName>
    <alternativeName>
        <fullName>P2</fullName>
    </alternativeName>
    <component>
        <recommendedName>
            <fullName>Protein X3</fullName>
        </recommendedName>
    </component>
    <component>
        <recommendedName>
            <fullName>Protein X4</fullName>
        </recommendedName>
    </component>
    <component>
        <recommendedName>
            <fullName>Movement protein</fullName>
            <shortName>MP</shortName>
        </recommendedName>
    </component>
    <component>
        <recommendedName>
            <fullName>Coat protein</fullName>
            <shortName>CP</shortName>
        </recommendedName>
    </component>
</protein>
<accession>P25247</accession>
<comment type="function">
    <text evidence="1">Protein 2A: implicated in RNA2 replication. Could also be required for nematode transmission of the virus (By similarity).</text>
</comment>
<comment type="function">
    <molecule>Movement protein</molecule>
    <text evidence="1">Transports viral genome to neighboring plant cells directly through plasmosdesmata, without any budding. The movement protein allows efficient cell to cell propagation, by bypassing the host cell wall barrier. Acts by forming a tubular structure at the host plasmodesmata, enlarging it enough to allow free passage of virion capsids (By similarity).</text>
</comment>
<comment type="subcellular location">
    <subcellularLocation>
        <location>Host cell junction</location>
        <location>Host plasmodesma</location>
    </subcellularLocation>
    <text evidence="1">Assembles in tubules that are embedded within modified plasmodesmata (By similarity). Movement proteins are targeted preferentially to calreticulin-labeled foci within the youngest cross walls, where they assemble into tubules. During cell division, they colocalize in the cell plate with KNOLLE, a cytokinesis-specific syntaxin (By similarity).</text>
</comment>
<comment type="subcellular location">
    <molecule>Coat protein</molecule>
    <subcellularLocation>
        <location evidence="5">Virion</location>
    </subcellularLocation>
</comment>
<comment type="PTM">
    <text evidence="3 4">Specific enzymatic cleavages in vivo by the P1 encoded 3C-like protease yield mature proteins.</text>
</comment>
<comment type="miscellaneous">
    <text>Virions are comprised of 60 copies of the coat protein.</text>
</comment>
<comment type="similarity">
    <text evidence="5">Belongs to the nepoviruses RNA2 polyprotein family.</text>
</comment>
<keyword id="KW-0167">Capsid protein</keyword>
<keyword id="KW-1031">Host cell junction</keyword>
<keyword id="KW-1185">Reference proteome</keyword>
<keyword id="KW-0677">Repeat</keyword>
<keyword id="KW-0813">Transport</keyword>
<keyword id="KW-0916">Viral movement protein</keyword>
<keyword id="KW-0946">Virion</keyword>
<evidence type="ECO:0000250" key="1"/>
<evidence type="ECO:0000256" key="2">
    <source>
        <dbReference type="SAM" id="MobiDB-lite"/>
    </source>
</evidence>
<evidence type="ECO:0000269" key="3">
    <source>
    </source>
</evidence>
<evidence type="ECO:0000269" key="4">
    <source>
    </source>
</evidence>
<evidence type="ECO:0000305" key="5"/>
<sequence>MSSICFAGGNHARLPSKAAYYRAISDRELDREGRFPCGCLAQYTVQAPPPAKTQEKAVGRSADLQKGNVAPLKKQRCDVVVAVSGPPPLELVYPARVGQHRLDQPSKGPLAVPSAKQTSTAMEVVLSAEEAAITAPWLLRPCKGEAPPPPPLTQRQQFAALKKRLAVKGQQIIREHIRARKAAKYAAIAKAKKAAALAAVKAAQEAPRLAAQKAAISKILRDRDVAALPPPPPPSAARLAAEAELASKAESLRRLKAFKTFSRVRPALNTSFPPPPPPPPARSSELLAAFEAAMNRSQPVQGGFSLPTRKGVYVAPTVQGVVRAGLRAQKGFLNAVSTGIVAGARILKSKSQNWFRRSMGIAHDYVEGCMASTVLGCAGPVVQRQEACSVVAAPPIVEPVLWVPPLSEYANDFPKLTCSTFTEWQRPRKQSIAISNLFRKLIDRALLVSGVSLIASVLLFEIAENFAVRQAVCPVEMPSCATSVSEKSLVSLDEGNFYLRKYLSPPPYPFGRESFYFQARPRFIGPMPSMVRAVPQIVQQPTMTEELEFEVPSSWSSPLPLFANFKVNRGACFLQVLPQRVVLPDECMDLLSLFEDQLPEGPLPSFSWSSPLPLFANFKVNRGACFLQVLPQRVVLPDECMDLLSLFEDQLPEGPLPSFSWSSPLPLFASFKVNRGACFLQVLPARKVVSDEFMDVLPFLFSPLVSHQEEEPEMVPAVLEAADSVGDITEAFFDDLECESFYDSYSDEEEAEWAEVPRCKTMSELCASLTLAGDAEGLRKSHGVFLKRLVTYLQSFEEPLYSSRAFYSVKVKPVYRPKKFEGHIDCTCLDGNMGEWEWRESVDAMWRCPGRLLNTKRTFTRDDWERVQYLRIGFNEGRYRRNWRVLNLEEMDLSLHEYPEISSAPVQSSLFSRVVDRGATLASSIPFVTRSNCQSSLGTPGLNVHTIHQEAPTTLRAPPFTGARNVMGSSDAGANAAPYRSEARKRWLSRKQEDSQEDNIKRYADKHGISFEEARAVYKAPKEGVPTQRSILPDVRDAYSARSAGARVRSLFGGSPTTRAQRTEDFVLTSPSAGDASSFSFYFNPVSEQEMAEQERGGNTMLSLDAVEVVIDPVGMPGDDTDLTVMVLWCQNSDDQRALIGAMSTFVGNGLARAVFYPGLKLLYANCRVRDGRVLKVIVSSTNSTLTHGLPQAQVSIGTLRQHLGPGHDRTISGALYASQQQGFNIRATEQGGAVTFAPQGGHVEGIPSANVQMGAGEHLIQAGPMQWRLQRSQSSRFVVSGHSRTRGSSLFTGSVDRTQQGTGAFEDPGFLPPRNSSVQGGSWQEGTEAAYLGKVTCAKDAKGGTLLHTLDIIKECKSQNLLRYKEWQRQGFLHGKLRLRCFIPTNIFCGHSMMCSLDAFGRYDSNVLGASFPVKLASLLPTEVISLADGPVVTWTFDIGRLCGHGLYYSEGAYARPKIYFLVLSDNDVPAEADWQFTYQLLFEDHTFSNSFGAVPFITLPHIFNRLDIGYWRGPTEIDLTSTPAPNAYRLLFGLSTVISGNMSTLNANQALLRFFQGSNGTLHGRIKKIGTALTTCSLLLSLRHKDASLTLETAYQRPHYILADGQGAFSLPISTPHAATSFLEDMLRLEIFAIAGPFSPKDNKAKYQFMCYFDHIELVEGVPRTIAGEQQFNWCSFRNFKIDDWKFEWPARLPDILDDKSEVLLRQHPLSLLISSTGFFTGRAIFVFQWGLNTTAGNMKGSFSARLAFGKGVEEIEQTSTVQPLVGACEARIPVEFKTYTGYTTSGPPGSMEPYIYVRLTQAKLVDRLSVNVILQEGFSFYGPSVKHFKKEVGTPSATLGTNNPVGRPPENVDTGGPGGQYAAALQAAQQAGKNPFGRG</sequence>
<organismHost>
    <name type="scientific">Nicotiana tabacum</name>
    <name type="common">Common tobacco</name>
    <dbReference type="NCBI Taxonomy" id="4097"/>
</organismHost>
<organismHost>
    <name type="scientific">Pelargonium</name>
    <dbReference type="NCBI Taxonomy" id="4030"/>
</organismHost>
<organismHost>
    <name type="scientific">Prunus</name>
    <dbReference type="NCBI Taxonomy" id="3754"/>
</organismHost>
<organismHost>
    <name type="scientific">Rubus</name>
    <name type="common">bramble</name>
    <dbReference type="NCBI Taxonomy" id="23216"/>
</organismHost>
<name>POL2_TORVR</name>
<feature type="chain" id="PRO_0000037127" description="Protein X3">
    <location>
        <begin position="1"/>
        <end position="301"/>
    </location>
</feature>
<feature type="chain" id="PRO_0000037128" description="Protein X4">
    <location>
        <begin position="302"/>
        <end position="934"/>
    </location>
</feature>
<feature type="chain" id="PRO_0000037129" description="Movement protein">
    <location>
        <begin position="935"/>
        <end position="1320"/>
    </location>
</feature>
<feature type="chain" id="PRO_0000037130" description="Coat protein">
    <location>
        <begin position="1321"/>
        <end position="1882"/>
    </location>
</feature>
<feature type="repeat" description="1">
    <location>
        <begin position="554"/>
        <end position="606"/>
    </location>
</feature>
<feature type="repeat" description="2">
    <location>
        <begin position="607"/>
        <end position="659"/>
    </location>
</feature>
<feature type="repeat" description="3; truncated and approximate">
    <location>
        <begin position="660"/>
        <end position="698"/>
    </location>
</feature>
<feature type="region of interest" description="2.5 X tandem repeats, Pro-rich">
    <location>
        <begin position="554"/>
        <end position="698"/>
    </location>
</feature>
<feature type="region of interest" description="Disordered" evidence="2">
    <location>
        <begin position="1289"/>
        <end position="1320"/>
    </location>
</feature>
<feature type="region of interest" description="Disordered" evidence="2">
    <location>
        <begin position="1838"/>
        <end position="1863"/>
    </location>
</feature>
<feature type="compositionally biased region" description="Polar residues" evidence="2">
    <location>
        <begin position="1289"/>
        <end position="1303"/>
    </location>
</feature>
<feature type="compositionally biased region" description="Polar residues" evidence="2">
    <location>
        <begin position="1838"/>
        <end position="1847"/>
    </location>
</feature>
<feature type="mutagenesis site" description="No cleavage between X3 and X4." evidence="3">
    <original>Q</original>
    <variation>A</variation>
    <location>
        <position position="301"/>
    </location>
</feature>
<feature type="mutagenesis site" description="No effect." evidence="3">
    <original>Q</original>
    <variation>A</variation>
    <location>
        <position position="319"/>
    </location>
</feature>
<proteinExistence type="evidence at protein level"/>
<dbReference type="EMBL" id="D12477">
    <property type="protein sequence ID" value="BAA02043.1"/>
    <property type="molecule type" value="Genomic_RNA"/>
</dbReference>
<dbReference type="PIR" id="JQ1093">
    <property type="entry name" value="GNVVTR"/>
</dbReference>
<dbReference type="RefSeq" id="NP_620762.1">
    <property type="nucleotide sequence ID" value="NC_003839.2"/>
</dbReference>
<dbReference type="SMR" id="P25247"/>
<dbReference type="GeneID" id="956646"/>
<dbReference type="KEGG" id="vg:956646"/>
<dbReference type="Proteomes" id="UP000000410">
    <property type="component" value="Genome"/>
</dbReference>
<dbReference type="GO" id="GO:0044219">
    <property type="term" value="C:host cell plasmodesma"/>
    <property type="evidence" value="ECO:0007669"/>
    <property type="project" value="UniProtKB-SubCell"/>
</dbReference>
<dbReference type="GO" id="GO:0019028">
    <property type="term" value="C:viral capsid"/>
    <property type="evidence" value="ECO:0007669"/>
    <property type="project" value="UniProtKB-KW"/>
</dbReference>
<dbReference type="GO" id="GO:0005198">
    <property type="term" value="F:structural molecule activity"/>
    <property type="evidence" value="ECO:0007669"/>
    <property type="project" value="InterPro"/>
</dbReference>
<dbReference type="GO" id="GO:0046740">
    <property type="term" value="P:transport of virus in host, cell to cell"/>
    <property type="evidence" value="ECO:0007669"/>
    <property type="project" value="UniProtKB-KW"/>
</dbReference>
<dbReference type="Gene3D" id="2.60.120.20">
    <property type="match status" value="2"/>
</dbReference>
<dbReference type="InterPro" id="IPR005054">
    <property type="entry name" value="Nepo_coat"/>
</dbReference>
<dbReference type="InterPro" id="IPR005305">
    <property type="entry name" value="Nepo_coat_C"/>
</dbReference>
<dbReference type="InterPro" id="IPR005306">
    <property type="entry name" value="Nepo_coat_N"/>
</dbReference>
<dbReference type="InterPro" id="IPR029053">
    <property type="entry name" value="Viral_coat"/>
</dbReference>
<dbReference type="Pfam" id="PF03391">
    <property type="entry name" value="Nepo_coat"/>
    <property type="match status" value="1"/>
</dbReference>
<dbReference type="Pfam" id="PF03688">
    <property type="entry name" value="Nepo_coat_C"/>
    <property type="match status" value="1"/>
</dbReference>
<dbReference type="Pfam" id="PF03689">
    <property type="entry name" value="Nepo_coat_N"/>
    <property type="match status" value="1"/>
</dbReference>
<dbReference type="SUPFAM" id="SSF88633">
    <property type="entry name" value="Positive stranded ssRNA viruses"/>
    <property type="match status" value="3"/>
</dbReference>
<reference key="1">
    <citation type="journal article" date="1991" name="J. Gen. Virol.">
        <title>Nucleotide sequence of tomato ringspot virus RNA-2.</title>
        <authorList>
            <person name="Rott M.E."/>
            <person name="Tremaine J.H."/>
            <person name="Rochon D.M."/>
        </authorList>
    </citation>
    <scope>NUCLEOTIDE SEQUENCE [GENOMIC RNA]</scope>
</reference>
<reference key="2">
    <citation type="journal article" date="1995" name="J. Gen. Virol.">
        <title>Tomato ringspot nepovirus protease: characterization and cleavage site specificity.</title>
        <authorList>
            <person name="Hans F."/>
            <person name="Sanfacon H."/>
        </authorList>
    </citation>
    <scope>PROTEOLYTIC PROCESSING OF POLYPROTEIN</scope>
</reference>
<reference key="3">
    <citation type="journal article" date="2001" name="J. Gen. Virol.">
        <title>Genomic organization of RNA2 of Tomato ringspot virus: processing at a third cleavage site in the N-terminal region of the polyprotein in vitro.</title>
        <authorList>
            <person name="Carrier K."/>
            <person name="Xiang Y."/>
            <person name="Sanfacon H."/>
        </authorList>
    </citation>
    <scope>PROTEOLYTIC PROCESSING OF POLYPROTEIN</scope>
    <scope>MUTAGENESIS OF GLN-301 AND GLN-319</scope>
</reference>